<reference key="1">
    <citation type="submission" date="2006-09" db="EMBL/GenBank/DDBJ databases">
        <authorList>
            <consortium name="The Klebsiella pneumonia Genome Sequencing Project"/>
            <person name="McClelland M."/>
            <person name="Sanderson E.K."/>
            <person name="Spieth J."/>
            <person name="Clifton W.S."/>
            <person name="Latreille P."/>
            <person name="Sabo A."/>
            <person name="Pepin K."/>
            <person name="Bhonagiri V."/>
            <person name="Porwollik S."/>
            <person name="Ali J."/>
            <person name="Wilson R.K."/>
        </authorList>
    </citation>
    <scope>NUCLEOTIDE SEQUENCE [LARGE SCALE GENOMIC DNA]</scope>
    <source>
        <strain>ATCC 700721 / MGH 78578</strain>
    </source>
</reference>
<protein>
    <recommendedName>
        <fullName evidence="1">Bifunctional protein FolD</fullName>
    </recommendedName>
    <domain>
        <recommendedName>
            <fullName evidence="1">Methylenetetrahydrofolate dehydrogenase</fullName>
            <ecNumber evidence="1">1.5.1.5</ecNumber>
        </recommendedName>
    </domain>
    <domain>
        <recommendedName>
            <fullName evidence="1">Methenyltetrahydrofolate cyclohydrolase</fullName>
            <ecNumber evidence="1">3.5.4.9</ecNumber>
        </recommendedName>
    </domain>
</protein>
<keyword id="KW-0028">Amino-acid biosynthesis</keyword>
<keyword id="KW-0368">Histidine biosynthesis</keyword>
<keyword id="KW-0378">Hydrolase</keyword>
<keyword id="KW-0486">Methionine biosynthesis</keyword>
<keyword id="KW-0511">Multifunctional enzyme</keyword>
<keyword id="KW-0521">NADP</keyword>
<keyword id="KW-0554">One-carbon metabolism</keyword>
<keyword id="KW-0560">Oxidoreductase</keyword>
<keyword id="KW-0658">Purine biosynthesis</keyword>
<feature type="chain" id="PRO_1000069245" description="Bifunctional protein FolD">
    <location>
        <begin position="1"/>
        <end position="288"/>
    </location>
</feature>
<feature type="binding site" evidence="1">
    <location>
        <begin position="166"/>
        <end position="168"/>
    </location>
    <ligand>
        <name>NADP(+)</name>
        <dbReference type="ChEBI" id="CHEBI:58349"/>
    </ligand>
</feature>
<feature type="binding site" evidence="1">
    <location>
        <position position="232"/>
    </location>
    <ligand>
        <name>NADP(+)</name>
        <dbReference type="ChEBI" id="CHEBI:58349"/>
    </ligand>
</feature>
<name>FOLD_KLEP7</name>
<proteinExistence type="inferred from homology"/>
<sequence>MAAKIIDGKTIAQQVRSEVAEKVKARVAAGKRAPGLAVVLVGSNPASQIYVGSKRKACEEVGFVSRSYDLPETTSEAELLELIDTLNADKTIDGILVQLPLPAGIDNVKVLERIAPDKDVDGFHPYNVGRLCQRAPRLRPCTPRGIVTLLERYNIDTYGLNAVVIGASNIVGRPMSMELLLAGCTTTVTHRFTKNLRHHVENADLLIVAVGKPGFIPGEWIKEGAIVVDVGINRLESGKVVGDVVYEDAAERASYITPVPGGVGPMTVATLIQNTLQACEEYHDVEEA</sequence>
<dbReference type="EC" id="1.5.1.5" evidence="1"/>
<dbReference type="EC" id="3.5.4.9" evidence="1"/>
<dbReference type="EMBL" id="CP000647">
    <property type="protein sequence ID" value="ABR75935.1"/>
    <property type="molecule type" value="Genomic_DNA"/>
</dbReference>
<dbReference type="RefSeq" id="WP_004143017.1">
    <property type="nucleotide sequence ID" value="NC_009648.1"/>
</dbReference>
<dbReference type="SMR" id="A6T5R4"/>
<dbReference type="STRING" id="272620.KPN_00484"/>
<dbReference type="jPOST" id="A6T5R4"/>
<dbReference type="PaxDb" id="272620-KPN_00484"/>
<dbReference type="EnsemblBacteria" id="ABR75935">
    <property type="protein sequence ID" value="ABR75935"/>
    <property type="gene ID" value="KPN_00484"/>
</dbReference>
<dbReference type="GeneID" id="93274612"/>
<dbReference type="KEGG" id="kpn:KPN_00484"/>
<dbReference type="HOGENOM" id="CLU_034045_2_1_6"/>
<dbReference type="UniPathway" id="UPA00193"/>
<dbReference type="Proteomes" id="UP000000265">
    <property type="component" value="Chromosome"/>
</dbReference>
<dbReference type="GO" id="GO:0005829">
    <property type="term" value="C:cytosol"/>
    <property type="evidence" value="ECO:0007669"/>
    <property type="project" value="TreeGrafter"/>
</dbReference>
<dbReference type="GO" id="GO:0004477">
    <property type="term" value="F:methenyltetrahydrofolate cyclohydrolase activity"/>
    <property type="evidence" value="ECO:0007669"/>
    <property type="project" value="UniProtKB-UniRule"/>
</dbReference>
<dbReference type="GO" id="GO:0004488">
    <property type="term" value="F:methylenetetrahydrofolate dehydrogenase (NADP+) activity"/>
    <property type="evidence" value="ECO:0007669"/>
    <property type="project" value="UniProtKB-UniRule"/>
</dbReference>
<dbReference type="GO" id="GO:0000105">
    <property type="term" value="P:L-histidine biosynthetic process"/>
    <property type="evidence" value="ECO:0007669"/>
    <property type="project" value="UniProtKB-KW"/>
</dbReference>
<dbReference type="GO" id="GO:0009086">
    <property type="term" value="P:methionine biosynthetic process"/>
    <property type="evidence" value="ECO:0007669"/>
    <property type="project" value="UniProtKB-KW"/>
</dbReference>
<dbReference type="GO" id="GO:0006164">
    <property type="term" value="P:purine nucleotide biosynthetic process"/>
    <property type="evidence" value="ECO:0007669"/>
    <property type="project" value="UniProtKB-KW"/>
</dbReference>
<dbReference type="GO" id="GO:0035999">
    <property type="term" value="P:tetrahydrofolate interconversion"/>
    <property type="evidence" value="ECO:0007669"/>
    <property type="project" value="UniProtKB-UniRule"/>
</dbReference>
<dbReference type="CDD" id="cd01080">
    <property type="entry name" value="NAD_bind_m-THF_DH_Cyclohyd"/>
    <property type="match status" value="1"/>
</dbReference>
<dbReference type="FunFam" id="3.40.50.10860:FF:000001">
    <property type="entry name" value="Bifunctional protein FolD"/>
    <property type="match status" value="1"/>
</dbReference>
<dbReference type="FunFam" id="3.40.50.720:FF:000006">
    <property type="entry name" value="Bifunctional protein FolD"/>
    <property type="match status" value="1"/>
</dbReference>
<dbReference type="Gene3D" id="3.40.50.10860">
    <property type="entry name" value="Leucine Dehydrogenase, chain A, domain 1"/>
    <property type="match status" value="1"/>
</dbReference>
<dbReference type="Gene3D" id="3.40.50.720">
    <property type="entry name" value="NAD(P)-binding Rossmann-like Domain"/>
    <property type="match status" value="1"/>
</dbReference>
<dbReference type="HAMAP" id="MF_01576">
    <property type="entry name" value="THF_DHG_CYH"/>
    <property type="match status" value="1"/>
</dbReference>
<dbReference type="InterPro" id="IPR046346">
    <property type="entry name" value="Aminoacid_DH-like_N_sf"/>
</dbReference>
<dbReference type="InterPro" id="IPR036291">
    <property type="entry name" value="NAD(P)-bd_dom_sf"/>
</dbReference>
<dbReference type="InterPro" id="IPR000672">
    <property type="entry name" value="THF_DH/CycHdrlase"/>
</dbReference>
<dbReference type="InterPro" id="IPR020630">
    <property type="entry name" value="THF_DH/CycHdrlase_cat_dom"/>
</dbReference>
<dbReference type="InterPro" id="IPR020867">
    <property type="entry name" value="THF_DH/CycHdrlase_CS"/>
</dbReference>
<dbReference type="InterPro" id="IPR020631">
    <property type="entry name" value="THF_DH/CycHdrlase_NAD-bd_dom"/>
</dbReference>
<dbReference type="NCBIfam" id="NF008058">
    <property type="entry name" value="PRK10792.1"/>
    <property type="match status" value="1"/>
</dbReference>
<dbReference type="NCBIfam" id="NF010783">
    <property type="entry name" value="PRK14186.1"/>
    <property type="match status" value="1"/>
</dbReference>
<dbReference type="PANTHER" id="PTHR48099:SF5">
    <property type="entry name" value="C-1-TETRAHYDROFOLATE SYNTHASE, CYTOPLASMIC"/>
    <property type="match status" value="1"/>
</dbReference>
<dbReference type="PANTHER" id="PTHR48099">
    <property type="entry name" value="C-1-TETRAHYDROFOLATE SYNTHASE, CYTOPLASMIC-RELATED"/>
    <property type="match status" value="1"/>
</dbReference>
<dbReference type="Pfam" id="PF00763">
    <property type="entry name" value="THF_DHG_CYH"/>
    <property type="match status" value="1"/>
</dbReference>
<dbReference type="Pfam" id="PF02882">
    <property type="entry name" value="THF_DHG_CYH_C"/>
    <property type="match status" value="1"/>
</dbReference>
<dbReference type="PRINTS" id="PR00085">
    <property type="entry name" value="THFDHDRGNASE"/>
</dbReference>
<dbReference type="SUPFAM" id="SSF53223">
    <property type="entry name" value="Aminoacid dehydrogenase-like, N-terminal domain"/>
    <property type="match status" value="1"/>
</dbReference>
<dbReference type="SUPFAM" id="SSF51735">
    <property type="entry name" value="NAD(P)-binding Rossmann-fold domains"/>
    <property type="match status" value="1"/>
</dbReference>
<dbReference type="PROSITE" id="PS00766">
    <property type="entry name" value="THF_DHG_CYH_1"/>
    <property type="match status" value="1"/>
</dbReference>
<dbReference type="PROSITE" id="PS00767">
    <property type="entry name" value="THF_DHG_CYH_2"/>
    <property type="match status" value="1"/>
</dbReference>
<comment type="function">
    <text evidence="1">Catalyzes the oxidation of 5,10-methylenetetrahydrofolate to 5,10-methenyltetrahydrofolate and then the hydrolysis of 5,10-methenyltetrahydrofolate to 10-formyltetrahydrofolate.</text>
</comment>
<comment type="catalytic activity">
    <reaction evidence="1">
        <text>(6R)-5,10-methylene-5,6,7,8-tetrahydrofolate + NADP(+) = (6R)-5,10-methenyltetrahydrofolate + NADPH</text>
        <dbReference type="Rhea" id="RHEA:22812"/>
        <dbReference type="ChEBI" id="CHEBI:15636"/>
        <dbReference type="ChEBI" id="CHEBI:57455"/>
        <dbReference type="ChEBI" id="CHEBI:57783"/>
        <dbReference type="ChEBI" id="CHEBI:58349"/>
        <dbReference type="EC" id="1.5.1.5"/>
    </reaction>
</comment>
<comment type="catalytic activity">
    <reaction evidence="1">
        <text>(6R)-5,10-methenyltetrahydrofolate + H2O = (6R)-10-formyltetrahydrofolate + H(+)</text>
        <dbReference type="Rhea" id="RHEA:23700"/>
        <dbReference type="ChEBI" id="CHEBI:15377"/>
        <dbReference type="ChEBI" id="CHEBI:15378"/>
        <dbReference type="ChEBI" id="CHEBI:57455"/>
        <dbReference type="ChEBI" id="CHEBI:195366"/>
        <dbReference type="EC" id="3.5.4.9"/>
    </reaction>
</comment>
<comment type="pathway">
    <text evidence="1">One-carbon metabolism; tetrahydrofolate interconversion.</text>
</comment>
<comment type="subunit">
    <text evidence="1">Homodimer.</text>
</comment>
<comment type="similarity">
    <text evidence="1">Belongs to the tetrahydrofolate dehydrogenase/cyclohydrolase family.</text>
</comment>
<gene>
    <name evidence="1" type="primary">folD</name>
    <name type="ordered locus">KPN78578_04740</name>
    <name type="ORF">KPN_00484</name>
</gene>
<accession>A6T5R4</accession>
<evidence type="ECO:0000255" key="1">
    <source>
        <dbReference type="HAMAP-Rule" id="MF_01576"/>
    </source>
</evidence>
<organism>
    <name type="scientific">Klebsiella pneumoniae subsp. pneumoniae (strain ATCC 700721 / MGH 78578)</name>
    <dbReference type="NCBI Taxonomy" id="272620"/>
    <lineage>
        <taxon>Bacteria</taxon>
        <taxon>Pseudomonadati</taxon>
        <taxon>Pseudomonadota</taxon>
        <taxon>Gammaproteobacteria</taxon>
        <taxon>Enterobacterales</taxon>
        <taxon>Enterobacteriaceae</taxon>
        <taxon>Klebsiella/Raoultella group</taxon>
        <taxon>Klebsiella</taxon>
        <taxon>Klebsiella pneumoniae complex</taxon>
    </lineage>
</organism>